<keyword id="KW-0046">Antibiotic resistance</keyword>
<keyword id="KW-0067">ATP-binding</keyword>
<keyword id="KW-0997">Cell inner membrane</keyword>
<keyword id="KW-1003">Cell membrane</keyword>
<keyword id="KW-0472">Membrane</keyword>
<keyword id="KW-0547">Nucleotide-binding</keyword>
<keyword id="KW-1185">Reference proteome</keyword>
<keyword id="KW-1278">Translocase</keyword>
<keyword id="KW-0812">Transmembrane</keyword>
<keyword id="KW-1133">Transmembrane helix</keyword>
<keyword id="KW-0813">Transport</keyword>
<sequence>MAGSTIELRGLRREFPSGEATVVALQDLDLTIEPGEMVAIMGASGSGKSTLMNILGCLDRPTSGSYRIAGRETSSLEADELSALRREHFGFIFQRYHLLPALSALGNVEIPAIYAGQPGEARRARAGELLARLGLADRSGHRPNQLSGGQQQRVSIARALMNGADVILADEPTGALDQRSGTEVLQILDELNRDGKTVIIVTHDASVAARAKRVIELRDGVVVADRLTSPEAARRAGDAPTRQPPATPRWNWRREYDRISEATRIAVLAMAAHRLRSFLTMLGIIIGIASVVFVVAVGDAAKRKVLADISSLGTNTIEIFPGKDMGDVRSSKIKTLVAADARALAQQPYIDGVTPTVSTTSTLRYGGLEANALVNGVGDQYFDVKGTKLASGRFFDASGLRDIVQDVVIDEKTRQTFFADVAGGAVGKVILIGKVPCRIVGVMQQQQSGFGSNQNLSVYLPYTTVQARFLGNSSLRSILLKVSDTVATADAEQDVTRFLTLRHRVKDFVILNTDDIRKTITSTTGTLTLMIAAIAVISLVVGGIGVMNIMLVSVSERVGEIGVRMAVGARRSDILQQFLIEAVVVCLIGGGLGVGVAFGLAALFNLVVPMFPLSLSGTSIAAAFVCSTGIGIVFGYLPARQASFLDPLAALSRD</sequence>
<protein>
    <recommendedName>
        <fullName evidence="1">Macrolide export ATP-binding/permease protein MacB</fullName>
        <ecNumber evidence="1">7.6.2.-</ecNumber>
    </recommendedName>
</protein>
<accession>Q2IXX0</accession>
<evidence type="ECO:0000255" key="1">
    <source>
        <dbReference type="HAMAP-Rule" id="MF_01720"/>
    </source>
</evidence>
<feature type="chain" id="PRO_0000269972" description="Macrolide export ATP-binding/permease protein MacB">
    <location>
        <begin position="1"/>
        <end position="654"/>
    </location>
</feature>
<feature type="transmembrane region" description="Helical" evidence="1">
    <location>
        <begin position="278"/>
        <end position="298"/>
    </location>
</feature>
<feature type="transmembrane region" description="Helical" evidence="1">
    <location>
        <begin position="527"/>
        <end position="547"/>
    </location>
</feature>
<feature type="transmembrane region" description="Helical" evidence="1">
    <location>
        <begin position="584"/>
        <end position="604"/>
    </location>
</feature>
<feature type="transmembrane region" description="Helical" evidence="1">
    <location>
        <begin position="619"/>
        <end position="639"/>
    </location>
</feature>
<feature type="domain" description="ABC transporter" evidence="1">
    <location>
        <begin position="6"/>
        <end position="244"/>
    </location>
</feature>
<feature type="binding site" evidence="1">
    <location>
        <begin position="42"/>
        <end position="49"/>
    </location>
    <ligand>
        <name>ATP</name>
        <dbReference type="ChEBI" id="CHEBI:30616"/>
    </ligand>
</feature>
<proteinExistence type="inferred from homology"/>
<reference key="1">
    <citation type="submission" date="2006-01" db="EMBL/GenBank/DDBJ databases">
        <title>Complete sequence of Rhodopseudomonas palustris HaA2.</title>
        <authorList>
            <consortium name="US DOE Joint Genome Institute"/>
            <person name="Copeland A."/>
            <person name="Lucas S."/>
            <person name="Lapidus A."/>
            <person name="Barry K."/>
            <person name="Detter J.C."/>
            <person name="Glavina T."/>
            <person name="Hammon N."/>
            <person name="Israni S."/>
            <person name="Pitluck S."/>
            <person name="Chain P."/>
            <person name="Malfatti S."/>
            <person name="Shin M."/>
            <person name="Vergez L."/>
            <person name="Schmutz J."/>
            <person name="Larimer F."/>
            <person name="Land M."/>
            <person name="Hauser L."/>
            <person name="Pelletier D.A."/>
            <person name="Kyrpides N."/>
            <person name="Anderson I."/>
            <person name="Oda Y."/>
            <person name="Harwood C.S."/>
            <person name="Richardson P."/>
        </authorList>
    </citation>
    <scope>NUCLEOTIDE SEQUENCE [LARGE SCALE GENOMIC DNA]</scope>
    <source>
        <strain>HaA2</strain>
    </source>
</reference>
<dbReference type="EC" id="7.6.2.-" evidence="1"/>
<dbReference type="EMBL" id="CP000250">
    <property type="protein sequence ID" value="ABD06940.1"/>
    <property type="molecule type" value="Genomic_DNA"/>
</dbReference>
<dbReference type="RefSeq" id="WP_011441127.1">
    <property type="nucleotide sequence ID" value="NC_007778.1"/>
</dbReference>
<dbReference type="SMR" id="Q2IXX0"/>
<dbReference type="STRING" id="316058.RPB_2235"/>
<dbReference type="KEGG" id="rpb:RPB_2235"/>
<dbReference type="eggNOG" id="COG0577">
    <property type="taxonomic scope" value="Bacteria"/>
</dbReference>
<dbReference type="eggNOG" id="COG1136">
    <property type="taxonomic scope" value="Bacteria"/>
</dbReference>
<dbReference type="HOGENOM" id="CLU_000604_78_1_5"/>
<dbReference type="OrthoDB" id="9786950at2"/>
<dbReference type="Proteomes" id="UP000008809">
    <property type="component" value="Chromosome"/>
</dbReference>
<dbReference type="GO" id="GO:0005886">
    <property type="term" value="C:plasma membrane"/>
    <property type="evidence" value="ECO:0007669"/>
    <property type="project" value="UniProtKB-SubCell"/>
</dbReference>
<dbReference type="GO" id="GO:0005524">
    <property type="term" value="F:ATP binding"/>
    <property type="evidence" value="ECO:0007669"/>
    <property type="project" value="UniProtKB-KW"/>
</dbReference>
<dbReference type="GO" id="GO:0016887">
    <property type="term" value="F:ATP hydrolysis activity"/>
    <property type="evidence" value="ECO:0007669"/>
    <property type="project" value="InterPro"/>
</dbReference>
<dbReference type="GO" id="GO:0022857">
    <property type="term" value="F:transmembrane transporter activity"/>
    <property type="evidence" value="ECO:0007669"/>
    <property type="project" value="TreeGrafter"/>
</dbReference>
<dbReference type="GO" id="GO:0046677">
    <property type="term" value="P:response to antibiotic"/>
    <property type="evidence" value="ECO:0007669"/>
    <property type="project" value="UniProtKB-KW"/>
</dbReference>
<dbReference type="CDD" id="cd03255">
    <property type="entry name" value="ABC_MJ0796_LolCDE_FtsE"/>
    <property type="match status" value="1"/>
</dbReference>
<dbReference type="FunFam" id="3.40.50.300:FF:000032">
    <property type="entry name" value="Export ABC transporter ATP-binding protein"/>
    <property type="match status" value="1"/>
</dbReference>
<dbReference type="Gene3D" id="3.40.50.300">
    <property type="entry name" value="P-loop containing nucleotide triphosphate hydrolases"/>
    <property type="match status" value="1"/>
</dbReference>
<dbReference type="InterPro" id="IPR003593">
    <property type="entry name" value="AAA+_ATPase"/>
</dbReference>
<dbReference type="InterPro" id="IPR003838">
    <property type="entry name" value="ABC3_permease_C"/>
</dbReference>
<dbReference type="InterPro" id="IPR003439">
    <property type="entry name" value="ABC_transporter-like_ATP-bd"/>
</dbReference>
<dbReference type="InterPro" id="IPR017871">
    <property type="entry name" value="ABC_transporter-like_CS"/>
</dbReference>
<dbReference type="InterPro" id="IPR017911">
    <property type="entry name" value="MacB-like_ATP-bd"/>
</dbReference>
<dbReference type="InterPro" id="IPR025857">
    <property type="entry name" value="MacB_PCD"/>
</dbReference>
<dbReference type="InterPro" id="IPR050250">
    <property type="entry name" value="Macrolide_Exporter_MacB"/>
</dbReference>
<dbReference type="InterPro" id="IPR027417">
    <property type="entry name" value="P-loop_NTPase"/>
</dbReference>
<dbReference type="PANTHER" id="PTHR30572:SF14">
    <property type="entry name" value="MACROLIDE EXPORT ATP-BINDING_PERMEASE PROTEIN MACB"/>
    <property type="match status" value="1"/>
</dbReference>
<dbReference type="PANTHER" id="PTHR30572">
    <property type="entry name" value="MEMBRANE COMPONENT OF TRANSPORTER-RELATED"/>
    <property type="match status" value="1"/>
</dbReference>
<dbReference type="Pfam" id="PF00005">
    <property type="entry name" value="ABC_tran"/>
    <property type="match status" value="1"/>
</dbReference>
<dbReference type="Pfam" id="PF02687">
    <property type="entry name" value="FtsX"/>
    <property type="match status" value="1"/>
</dbReference>
<dbReference type="Pfam" id="PF12704">
    <property type="entry name" value="MacB_PCD"/>
    <property type="match status" value="1"/>
</dbReference>
<dbReference type="SMART" id="SM00382">
    <property type="entry name" value="AAA"/>
    <property type="match status" value="1"/>
</dbReference>
<dbReference type="SUPFAM" id="SSF52540">
    <property type="entry name" value="P-loop containing nucleoside triphosphate hydrolases"/>
    <property type="match status" value="1"/>
</dbReference>
<dbReference type="PROSITE" id="PS00211">
    <property type="entry name" value="ABC_TRANSPORTER_1"/>
    <property type="match status" value="1"/>
</dbReference>
<dbReference type="PROSITE" id="PS50893">
    <property type="entry name" value="ABC_TRANSPORTER_2"/>
    <property type="match status" value="1"/>
</dbReference>
<dbReference type="PROSITE" id="PS51267">
    <property type="entry name" value="MACB"/>
    <property type="match status" value="1"/>
</dbReference>
<name>MACB_RHOP2</name>
<organism>
    <name type="scientific">Rhodopseudomonas palustris (strain HaA2)</name>
    <dbReference type="NCBI Taxonomy" id="316058"/>
    <lineage>
        <taxon>Bacteria</taxon>
        <taxon>Pseudomonadati</taxon>
        <taxon>Pseudomonadota</taxon>
        <taxon>Alphaproteobacteria</taxon>
        <taxon>Hyphomicrobiales</taxon>
        <taxon>Nitrobacteraceae</taxon>
        <taxon>Rhodopseudomonas</taxon>
    </lineage>
</organism>
<gene>
    <name evidence="1" type="primary">macB</name>
    <name type="ordered locus">RPB_2235</name>
</gene>
<comment type="function">
    <text evidence="1">Non-canonical ABC transporter that contains transmembrane domains (TMD), which form a pore in the inner membrane, and an ATP-binding domain (NBD), which is responsible for energy generation. Confers resistance against macrolides.</text>
</comment>
<comment type="subunit">
    <text evidence="1">Homodimer.</text>
</comment>
<comment type="subcellular location">
    <subcellularLocation>
        <location evidence="1">Cell inner membrane</location>
        <topology evidence="1">Multi-pass membrane protein</topology>
    </subcellularLocation>
</comment>
<comment type="similarity">
    <text evidence="1">Belongs to the ABC transporter superfamily. Macrolide exporter (TC 3.A.1.122) family.</text>
</comment>